<evidence type="ECO:0000255" key="1">
    <source>
        <dbReference type="HAMAP-Rule" id="MF_01337"/>
    </source>
</evidence>
<evidence type="ECO:0000305" key="2"/>
<sequence>MDKKSARIRRATRARRKLKELGATRLVVHRTPRHIYAQVIAPNGSEVLVAASTVEKAIAEQLKYTGNKDAAAAVGKAVAERALEKGIKDVSFDRSGFQYHGRVQALADAAREAGLQF</sequence>
<keyword id="KW-0687">Ribonucleoprotein</keyword>
<keyword id="KW-0689">Ribosomal protein</keyword>
<keyword id="KW-0694">RNA-binding</keyword>
<keyword id="KW-0699">rRNA-binding</keyword>
<accession>A9MSY2</accession>
<feature type="chain" id="PRO_1000086684" description="Large ribosomal subunit protein uL18">
    <location>
        <begin position="1"/>
        <end position="117"/>
    </location>
</feature>
<gene>
    <name evidence="1" type="primary">rplR</name>
    <name type="ordered locus">SPAB_04265</name>
</gene>
<comment type="function">
    <text evidence="1">This is one of the proteins that bind and probably mediate the attachment of the 5S RNA into the large ribosomal subunit, where it forms part of the central protuberance.</text>
</comment>
<comment type="subunit">
    <text evidence="1">Part of the 50S ribosomal subunit; part of the 5S rRNA/L5/L18/L25 subcomplex. Contacts the 5S and 23S rRNAs.</text>
</comment>
<comment type="similarity">
    <text evidence="1">Belongs to the universal ribosomal protein uL18 family.</text>
</comment>
<name>RL18_SALPB</name>
<proteinExistence type="inferred from homology"/>
<organism>
    <name type="scientific">Salmonella paratyphi B (strain ATCC BAA-1250 / SPB7)</name>
    <dbReference type="NCBI Taxonomy" id="1016998"/>
    <lineage>
        <taxon>Bacteria</taxon>
        <taxon>Pseudomonadati</taxon>
        <taxon>Pseudomonadota</taxon>
        <taxon>Gammaproteobacteria</taxon>
        <taxon>Enterobacterales</taxon>
        <taxon>Enterobacteriaceae</taxon>
        <taxon>Salmonella</taxon>
    </lineage>
</organism>
<protein>
    <recommendedName>
        <fullName evidence="1">Large ribosomal subunit protein uL18</fullName>
    </recommendedName>
    <alternativeName>
        <fullName evidence="2">50S ribosomal protein L18</fullName>
    </alternativeName>
</protein>
<reference key="1">
    <citation type="submission" date="2007-11" db="EMBL/GenBank/DDBJ databases">
        <authorList>
            <consortium name="The Salmonella enterica serovar Paratyphi B Genome Sequencing Project"/>
            <person name="McClelland M."/>
            <person name="Sanderson E.K."/>
            <person name="Porwollik S."/>
            <person name="Spieth J."/>
            <person name="Clifton W.S."/>
            <person name="Fulton R."/>
            <person name="Cordes M."/>
            <person name="Wollam A."/>
            <person name="Shah N."/>
            <person name="Pepin K."/>
            <person name="Bhonagiri V."/>
            <person name="Nash W."/>
            <person name="Johnson M."/>
            <person name="Thiruvilangam P."/>
            <person name="Wilson R."/>
        </authorList>
    </citation>
    <scope>NUCLEOTIDE SEQUENCE [LARGE SCALE GENOMIC DNA]</scope>
    <source>
        <strain>ATCC BAA-1250 / SPB7</strain>
    </source>
</reference>
<dbReference type="EMBL" id="CP000886">
    <property type="protein sequence ID" value="ABX69582.1"/>
    <property type="molecule type" value="Genomic_DNA"/>
</dbReference>
<dbReference type="RefSeq" id="WP_000358956.1">
    <property type="nucleotide sequence ID" value="NC_010102.1"/>
</dbReference>
<dbReference type="SMR" id="A9MSY2"/>
<dbReference type="GeneID" id="93035747"/>
<dbReference type="KEGG" id="spq:SPAB_04265"/>
<dbReference type="PATRIC" id="fig|1016998.12.peg.4011"/>
<dbReference type="HOGENOM" id="CLU_098841_0_1_6"/>
<dbReference type="BioCyc" id="SENT1016998:SPAB_RS17355-MONOMER"/>
<dbReference type="Proteomes" id="UP000008556">
    <property type="component" value="Chromosome"/>
</dbReference>
<dbReference type="GO" id="GO:0022625">
    <property type="term" value="C:cytosolic large ribosomal subunit"/>
    <property type="evidence" value="ECO:0007669"/>
    <property type="project" value="TreeGrafter"/>
</dbReference>
<dbReference type="GO" id="GO:0008097">
    <property type="term" value="F:5S rRNA binding"/>
    <property type="evidence" value="ECO:0007669"/>
    <property type="project" value="TreeGrafter"/>
</dbReference>
<dbReference type="GO" id="GO:0003735">
    <property type="term" value="F:structural constituent of ribosome"/>
    <property type="evidence" value="ECO:0007669"/>
    <property type="project" value="InterPro"/>
</dbReference>
<dbReference type="GO" id="GO:0006412">
    <property type="term" value="P:translation"/>
    <property type="evidence" value="ECO:0007669"/>
    <property type="project" value="UniProtKB-UniRule"/>
</dbReference>
<dbReference type="CDD" id="cd00432">
    <property type="entry name" value="Ribosomal_L18_L5e"/>
    <property type="match status" value="1"/>
</dbReference>
<dbReference type="FunFam" id="3.30.420.100:FF:000001">
    <property type="entry name" value="50S ribosomal protein L18"/>
    <property type="match status" value="1"/>
</dbReference>
<dbReference type="Gene3D" id="3.30.420.100">
    <property type="match status" value="1"/>
</dbReference>
<dbReference type="HAMAP" id="MF_01337_B">
    <property type="entry name" value="Ribosomal_uL18_B"/>
    <property type="match status" value="1"/>
</dbReference>
<dbReference type="InterPro" id="IPR004389">
    <property type="entry name" value="Ribosomal_uL18_bac-type"/>
</dbReference>
<dbReference type="InterPro" id="IPR005484">
    <property type="entry name" value="Ribosomal_uL18_bac/euk"/>
</dbReference>
<dbReference type="NCBIfam" id="TIGR00060">
    <property type="entry name" value="L18_bact"/>
    <property type="match status" value="1"/>
</dbReference>
<dbReference type="PANTHER" id="PTHR12899">
    <property type="entry name" value="39S RIBOSOMAL PROTEIN L18, MITOCHONDRIAL"/>
    <property type="match status" value="1"/>
</dbReference>
<dbReference type="PANTHER" id="PTHR12899:SF3">
    <property type="entry name" value="LARGE RIBOSOMAL SUBUNIT PROTEIN UL18M"/>
    <property type="match status" value="1"/>
</dbReference>
<dbReference type="Pfam" id="PF00861">
    <property type="entry name" value="Ribosomal_L18p"/>
    <property type="match status" value="1"/>
</dbReference>
<dbReference type="SUPFAM" id="SSF53137">
    <property type="entry name" value="Translational machinery components"/>
    <property type="match status" value="1"/>
</dbReference>